<proteinExistence type="evidence at transcript level"/>
<keyword id="KW-1003">Cell membrane</keyword>
<keyword id="KW-0961">Cell wall biogenesis/degradation</keyword>
<keyword id="KW-0325">Glycoprotein</keyword>
<keyword id="KW-0328">Glycosyltransferase</keyword>
<keyword id="KW-0472">Membrane</keyword>
<keyword id="KW-1185">Reference proteome</keyword>
<keyword id="KW-0749">Sporulation</keyword>
<keyword id="KW-0808">Transferase</keyword>
<keyword id="KW-0812">Transmembrane</keyword>
<keyword id="KW-1133">Transmembrane helix</keyword>
<reference key="1">
    <citation type="journal article" date="2001" name="Genome Res.">
        <title>Sequence and analysis of chromosome I of the amitochondriate intracellular parasite Encephalitozoon cuniculi (Microspora).</title>
        <authorList>
            <person name="Peyret P."/>
            <person name="Katinka M.D."/>
            <person name="Duprat S."/>
            <person name="Duffieux F."/>
            <person name="Barbe V."/>
            <person name="Barbazanges M."/>
            <person name="Weissenbach J."/>
            <person name="Saurin W."/>
            <person name="Vivares C.P."/>
        </authorList>
    </citation>
    <scope>NUCLEOTIDE SEQUENCE [LARGE SCALE GENOMIC DNA]</scope>
    <source>
        <strain>GB-M1</strain>
    </source>
</reference>
<reference key="2">
    <citation type="journal article" date="2001" name="Nature">
        <title>Genome sequence and gene compaction of the eukaryote parasite Encephalitozoon cuniculi.</title>
        <authorList>
            <person name="Katinka M.D."/>
            <person name="Duprat S."/>
            <person name="Cornillot E."/>
            <person name="Metenier G."/>
            <person name="Thomarat F."/>
            <person name="Prensier G."/>
            <person name="Barbe V."/>
            <person name="Peyretaillade E."/>
            <person name="Brottier P."/>
            <person name="Wincker P."/>
            <person name="Delbac F."/>
            <person name="El Alaoui H."/>
            <person name="Peyret P."/>
            <person name="Saurin W."/>
            <person name="Gouy M."/>
            <person name="Weissenbach J."/>
            <person name="Vivares C.P."/>
        </authorList>
    </citation>
    <scope>NUCLEOTIDE SEQUENCE [LARGE SCALE GENOMIC DNA]</scope>
    <source>
        <strain>GB-M1</strain>
    </source>
</reference>
<reference key="3">
    <citation type="journal article" date="2006" name="J. Eukaryot. Microbiol.">
        <title>Identification of novel developmentally regulated genes in Encephalitozoon cuniculi: an endochitinase, a chitin-synthase, and two subtilisin-like proteases are induced during meront-to-sporont differentiation.</title>
        <authorList>
            <person name="Roennebaeumer K."/>
            <person name="Wagener J."/>
            <person name="Gross U."/>
            <person name="Bohne W."/>
        </authorList>
    </citation>
    <scope>DEVELOPMENTAL STAGE</scope>
</reference>
<protein>
    <recommendedName>
        <fullName>Chitin synthase 1</fullName>
        <ecNumber>2.4.1.16</ecNumber>
    </recommendedName>
    <alternativeName>
        <fullName>Chitin-UDP acetyl-glucosaminyl transferase 1</fullName>
    </alternativeName>
    <alternativeName>
        <fullName>Class-IV chitin synthase 1</fullName>
    </alternativeName>
</protein>
<dbReference type="EC" id="2.4.1.16"/>
<dbReference type="EMBL" id="AL391737">
    <property type="protein sequence ID" value="CAD25012.1"/>
    <property type="molecule type" value="Genomic_DNA"/>
</dbReference>
<dbReference type="RefSeq" id="XP_965977.1">
    <property type="nucleotide sequence ID" value="XM_960884.1"/>
</dbReference>
<dbReference type="STRING" id="284813.Q8SSI7"/>
<dbReference type="CAZy" id="GT2">
    <property type="family name" value="Glycosyltransferase Family 2"/>
</dbReference>
<dbReference type="GlyCosmos" id="Q8SSI7">
    <property type="glycosylation" value="2 sites, No reported glycans"/>
</dbReference>
<dbReference type="VEuPathDB" id="MicrosporidiaDB:ECU01_1390"/>
<dbReference type="HOGENOM" id="CLU_002572_0_1_1"/>
<dbReference type="InParanoid" id="Q8SSI7"/>
<dbReference type="OMA" id="PQDWKVF"/>
<dbReference type="OrthoDB" id="2186317at2759"/>
<dbReference type="Proteomes" id="UP000000819">
    <property type="component" value="Chromosome I"/>
</dbReference>
<dbReference type="GO" id="GO:0030428">
    <property type="term" value="C:cell septum"/>
    <property type="evidence" value="ECO:0007669"/>
    <property type="project" value="TreeGrafter"/>
</dbReference>
<dbReference type="GO" id="GO:0005886">
    <property type="term" value="C:plasma membrane"/>
    <property type="evidence" value="ECO:0007669"/>
    <property type="project" value="UniProtKB-SubCell"/>
</dbReference>
<dbReference type="GO" id="GO:0004100">
    <property type="term" value="F:chitin synthase activity"/>
    <property type="evidence" value="ECO:0007669"/>
    <property type="project" value="UniProtKB-EC"/>
</dbReference>
<dbReference type="GO" id="GO:0071555">
    <property type="term" value="P:cell wall organization"/>
    <property type="evidence" value="ECO:0007669"/>
    <property type="project" value="UniProtKB-KW"/>
</dbReference>
<dbReference type="GO" id="GO:0006031">
    <property type="term" value="P:chitin biosynthetic process"/>
    <property type="evidence" value="ECO:0007669"/>
    <property type="project" value="TreeGrafter"/>
</dbReference>
<dbReference type="GO" id="GO:0030435">
    <property type="term" value="P:sporulation resulting in formation of a cellular spore"/>
    <property type="evidence" value="ECO:0007669"/>
    <property type="project" value="UniProtKB-KW"/>
</dbReference>
<dbReference type="CDD" id="cd04190">
    <property type="entry name" value="Chitin_synth_C"/>
    <property type="match status" value="1"/>
</dbReference>
<dbReference type="Gene3D" id="3.90.550.10">
    <property type="entry name" value="Spore Coat Polysaccharide Biosynthesis Protein SpsA, Chain A"/>
    <property type="match status" value="1"/>
</dbReference>
<dbReference type="InterPro" id="IPR004835">
    <property type="entry name" value="Chitin_synth"/>
</dbReference>
<dbReference type="InterPro" id="IPR029044">
    <property type="entry name" value="Nucleotide-diphossugar_trans"/>
</dbReference>
<dbReference type="PANTHER" id="PTHR22914">
    <property type="entry name" value="CHITIN SYNTHASE"/>
    <property type="match status" value="1"/>
</dbReference>
<dbReference type="PANTHER" id="PTHR22914:SF16">
    <property type="entry name" value="CHITIN SYNTHASE 3"/>
    <property type="match status" value="1"/>
</dbReference>
<dbReference type="Pfam" id="PF03142">
    <property type="entry name" value="Chitin_synth_2"/>
    <property type="match status" value="2"/>
</dbReference>
<dbReference type="SUPFAM" id="SSF53448">
    <property type="entry name" value="Nucleotide-diphospho-sugar transferases"/>
    <property type="match status" value="1"/>
</dbReference>
<feature type="chain" id="PRO_0000382935" description="Chitin synthase 1">
    <location>
        <begin position="1"/>
        <end position="816"/>
    </location>
</feature>
<feature type="topological domain" description="Cytoplasmic" evidence="5">
    <location>
        <begin position="1"/>
        <end position="32"/>
    </location>
</feature>
<feature type="transmembrane region" description="Helical" evidence="1">
    <location>
        <begin position="33"/>
        <end position="53"/>
    </location>
</feature>
<feature type="topological domain" description="Extracellular" evidence="5">
    <location>
        <begin position="54"/>
        <end position="63"/>
    </location>
</feature>
<feature type="transmembrane region" description="Helical" evidence="1">
    <location>
        <begin position="64"/>
        <end position="84"/>
    </location>
</feature>
<feature type="topological domain" description="Cytoplasmic" evidence="5">
    <location>
        <begin position="85"/>
        <end position="240"/>
    </location>
</feature>
<feature type="transmembrane region" description="Helical" evidence="1">
    <location>
        <begin position="241"/>
        <end position="261"/>
    </location>
</feature>
<feature type="topological domain" description="Extracellular" evidence="5">
    <location>
        <begin position="262"/>
        <end position="697"/>
    </location>
</feature>
<feature type="transmembrane region" description="Helical" evidence="1">
    <location>
        <begin position="698"/>
        <end position="718"/>
    </location>
</feature>
<feature type="topological domain" description="Cytoplasmic" evidence="5">
    <location>
        <begin position="719"/>
        <end position="720"/>
    </location>
</feature>
<feature type="transmembrane region" description="Helical" evidence="1">
    <location>
        <begin position="721"/>
        <end position="741"/>
    </location>
</feature>
<feature type="topological domain" description="Extracellular" evidence="5">
    <location>
        <begin position="742"/>
        <end position="745"/>
    </location>
</feature>
<feature type="transmembrane region" description="Helical" evidence="1">
    <location>
        <begin position="746"/>
        <end position="766"/>
    </location>
</feature>
<feature type="topological domain" description="Cytoplasmic" evidence="5">
    <location>
        <begin position="767"/>
        <end position="816"/>
    </location>
</feature>
<feature type="region of interest" description="Disordered" evidence="3">
    <location>
        <begin position="1"/>
        <end position="21"/>
    </location>
</feature>
<feature type="glycosylation site" description="N-linked (GlcNAc...) asparagine" evidence="2">
    <location>
        <position position="319"/>
    </location>
</feature>
<feature type="glycosylation site" description="N-linked (GlcNAc...) asparagine" evidence="2">
    <location>
        <position position="664"/>
    </location>
</feature>
<comment type="function">
    <text evidence="5">Polymerizes chitin, a structural polymer of the cell wall and septum, by transferring the sugar moiety of UDP-GlcNAc to the non-reducing end of the growing chitin polymer.</text>
</comment>
<comment type="catalytic activity">
    <reaction>
        <text>[(1-&gt;4)-N-acetyl-beta-D-glucosaminyl](n) + UDP-N-acetyl-alpha-D-glucosamine = [(1-&gt;4)-N-acetyl-beta-D-glucosaminyl](n+1) + UDP + H(+)</text>
        <dbReference type="Rhea" id="RHEA:16637"/>
        <dbReference type="Rhea" id="RHEA-COMP:9593"/>
        <dbReference type="Rhea" id="RHEA-COMP:9595"/>
        <dbReference type="ChEBI" id="CHEBI:15378"/>
        <dbReference type="ChEBI" id="CHEBI:17029"/>
        <dbReference type="ChEBI" id="CHEBI:57705"/>
        <dbReference type="ChEBI" id="CHEBI:58223"/>
        <dbReference type="EC" id="2.4.1.16"/>
    </reaction>
</comment>
<comment type="subcellular location">
    <subcellularLocation>
        <location evidence="5">Cell membrane</location>
        <topology evidence="1">Multi-pass membrane protein</topology>
    </subcellularLocation>
</comment>
<comment type="developmental stage">
    <text evidence="4">Expression is low in meronts, but becomes induced when meronts start to differentiate into sporonts.</text>
</comment>
<comment type="similarity">
    <text evidence="5">Belongs to the chitin synthase family. Class IV subfamily.</text>
</comment>
<organism>
    <name type="scientific">Encephalitozoon cuniculi (strain GB-M1)</name>
    <name type="common">Microsporidian parasite</name>
    <dbReference type="NCBI Taxonomy" id="284813"/>
    <lineage>
        <taxon>Eukaryota</taxon>
        <taxon>Fungi</taxon>
        <taxon>Fungi incertae sedis</taxon>
        <taxon>Microsporidia</taxon>
        <taxon>Unikaryonidae</taxon>
        <taxon>Encephalitozoon</taxon>
    </lineage>
</organism>
<evidence type="ECO:0000255" key="1"/>
<evidence type="ECO:0000255" key="2">
    <source>
        <dbReference type="PROSITE-ProRule" id="PRU00498"/>
    </source>
</evidence>
<evidence type="ECO:0000256" key="3">
    <source>
        <dbReference type="SAM" id="MobiDB-lite"/>
    </source>
</evidence>
<evidence type="ECO:0000269" key="4">
    <source>
    </source>
</evidence>
<evidence type="ECO:0000305" key="5"/>
<sequence>MLSQGEILRNPSRTRLQRPPKSRSERKGWWYRVTIFLTCLIPNFMLRCFGMTTPEVQHAWREKVALCICIFFCWIILGFTTYGMNTIICKGSNQYVASRLKRDAFDGNTVIANGGIYYTDDEYAFGENHTYAFEKKSGACKLAFGRQLPSGDEDIDDLERINDIYWDWGDIMSKGMIVVGNKVYDPSYCTEPLFEEFNRKYAGTEGKPDFDTDEWRCYEDMFYAGKVATKTPGCLLADTMFWITTISIFGLIITKFLLGFFYSWYAKRRPKPSPKITPCILLVTCYSEGKDGIKNTLDSLCKQDYGYDYKLIVVICDGNITGSGNSMSTPDIVLGLSDVDRRAEPKGYISLTHGTKRYNRAKVHAGYYHVREEKKSRRYRCWPCFGRQADSSEVENYKTRILVINKCGNPSETFKAGNRGKRDSQVILMSFFSKLIYGDRMTELDFEIYQKMKFLMPHIEPEDFECILMVDADTIVKPDALSIMVNVFETDQKVIGMCGETMILNKFESWVTMIQVFEYYISHHLSKAFESVFGGVTCLPGCFCMYRIKIVTNQQGQLLSGPSKSRASVPRFSSMKSILSSSLEKSLCLPILANPAIINAYSVLEVKTLHQKNLLHLGEDRYLTTLLLKTFYRRKLVFIPAAKCETYVPGEFSVLLSQRRRWINSTIHNLFELVQVNNLCGAFCFSMQLVVVMELFGTLVLPAAIIFTFVMIAVSILIEPAWVPLIMLVGIFGLPAVLILITTMEIQYVFWCLVYILSIPIWNFVLPTYAFWHFDNFSWGDTRKVDGEGKEDEEGEFDHTKIRIRELEEFLSEANK</sequence>
<accession>Q8SSI7</accession>
<name>CHS1_ENCCU</name>
<gene>
    <name type="primary">CHS1</name>
    <name type="ordered locus">ECU01_1390</name>
</gene>